<protein>
    <recommendedName>
        <fullName evidence="1">ATP synthase subunit alpha</fullName>
        <ecNumber evidence="1">7.1.2.2</ecNumber>
    </recommendedName>
    <alternativeName>
        <fullName evidence="1">ATP synthase F1 sector subunit alpha</fullName>
    </alternativeName>
    <alternativeName>
        <fullName evidence="1">F-ATPase subunit alpha</fullName>
    </alternativeName>
</protein>
<reference key="1">
    <citation type="journal article" date="2004" name="Proc. Natl. Acad. Sci. U.S.A.">
        <title>The louse-borne human pathogen Bartonella quintana is a genomic derivative of the zoonotic agent Bartonella henselae.</title>
        <authorList>
            <person name="Alsmark U.C.M."/>
            <person name="Frank A.C."/>
            <person name="Karlberg E.O."/>
            <person name="Legault B.-A."/>
            <person name="Ardell D.H."/>
            <person name="Canbaeck B."/>
            <person name="Eriksson A.-S."/>
            <person name="Naeslund A.K."/>
            <person name="Handley S.A."/>
            <person name="Huvet M."/>
            <person name="La Scola B."/>
            <person name="Holmberg M."/>
            <person name="Andersson S.G.E."/>
        </authorList>
    </citation>
    <scope>NUCLEOTIDE SEQUENCE [LARGE SCALE GENOMIC DNA]</scope>
    <source>
        <strain>Toulouse</strain>
    </source>
</reference>
<dbReference type="EC" id="7.1.2.2" evidence="1"/>
<dbReference type="EMBL" id="BX897700">
    <property type="protein sequence ID" value="CAF26684.1"/>
    <property type="molecule type" value="Genomic_DNA"/>
</dbReference>
<dbReference type="RefSeq" id="WP_011179854.1">
    <property type="nucleotide sequence ID" value="NC_005955.1"/>
</dbReference>
<dbReference type="SMR" id="Q6FYM1"/>
<dbReference type="GeneID" id="56533560"/>
<dbReference type="KEGG" id="bqu:BQ12250"/>
<dbReference type="eggNOG" id="COG0056">
    <property type="taxonomic scope" value="Bacteria"/>
</dbReference>
<dbReference type="HOGENOM" id="CLU_010091_2_1_5"/>
<dbReference type="OrthoDB" id="9803053at2"/>
<dbReference type="Proteomes" id="UP000000597">
    <property type="component" value="Chromosome"/>
</dbReference>
<dbReference type="GO" id="GO:0005886">
    <property type="term" value="C:plasma membrane"/>
    <property type="evidence" value="ECO:0007669"/>
    <property type="project" value="UniProtKB-SubCell"/>
</dbReference>
<dbReference type="GO" id="GO:0045259">
    <property type="term" value="C:proton-transporting ATP synthase complex"/>
    <property type="evidence" value="ECO:0007669"/>
    <property type="project" value="UniProtKB-KW"/>
</dbReference>
<dbReference type="GO" id="GO:0043531">
    <property type="term" value="F:ADP binding"/>
    <property type="evidence" value="ECO:0007669"/>
    <property type="project" value="TreeGrafter"/>
</dbReference>
<dbReference type="GO" id="GO:0005524">
    <property type="term" value="F:ATP binding"/>
    <property type="evidence" value="ECO:0007669"/>
    <property type="project" value="UniProtKB-UniRule"/>
</dbReference>
<dbReference type="GO" id="GO:0046933">
    <property type="term" value="F:proton-transporting ATP synthase activity, rotational mechanism"/>
    <property type="evidence" value="ECO:0007669"/>
    <property type="project" value="UniProtKB-UniRule"/>
</dbReference>
<dbReference type="CDD" id="cd18113">
    <property type="entry name" value="ATP-synt_F1_alpha_C"/>
    <property type="match status" value="1"/>
</dbReference>
<dbReference type="CDD" id="cd18116">
    <property type="entry name" value="ATP-synt_F1_alpha_N"/>
    <property type="match status" value="1"/>
</dbReference>
<dbReference type="CDD" id="cd01132">
    <property type="entry name" value="F1-ATPase_alpha_CD"/>
    <property type="match status" value="1"/>
</dbReference>
<dbReference type="FunFam" id="1.20.150.20:FF:000001">
    <property type="entry name" value="ATP synthase subunit alpha"/>
    <property type="match status" value="1"/>
</dbReference>
<dbReference type="FunFam" id="2.40.30.20:FF:000001">
    <property type="entry name" value="ATP synthase subunit alpha"/>
    <property type="match status" value="1"/>
</dbReference>
<dbReference type="FunFam" id="3.40.50.300:FF:002432">
    <property type="entry name" value="ATP synthase subunit alpha, mitochondrial"/>
    <property type="match status" value="1"/>
</dbReference>
<dbReference type="Gene3D" id="2.40.30.20">
    <property type="match status" value="1"/>
</dbReference>
<dbReference type="Gene3D" id="1.20.150.20">
    <property type="entry name" value="ATP synthase alpha/beta chain, C-terminal domain"/>
    <property type="match status" value="1"/>
</dbReference>
<dbReference type="Gene3D" id="3.40.50.300">
    <property type="entry name" value="P-loop containing nucleotide triphosphate hydrolases"/>
    <property type="match status" value="1"/>
</dbReference>
<dbReference type="HAMAP" id="MF_01346">
    <property type="entry name" value="ATP_synth_alpha_bact"/>
    <property type="match status" value="1"/>
</dbReference>
<dbReference type="InterPro" id="IPR023366">
    <property type="entry name" value="ATP_synth_asu-like_sf"/>
</dbReference>
<dbReference type="InterPro" id="IPR000793">
    <property type="entry name" value="ATP_synth_asu_C"/>
</dbReference>
<dbReference type="InterPro" id="IPR038376">
    <property type="entry name" value="ATP_synth_asu_C_sf"/>
</dbReference>
<dbReference type="InterPro" id="IPR033732">
    <property type="entry name" value="ATP_synth_F1_a_nt-bd_dom"/>
</dbReference>
<dbReference type="InterPro" id="IPR005294">
    <property type="entry name" value="ATP_synth_F1_asu"/>
</dbReference>
<dbReference type="InterPro" id="IPR020003">
    <property type="entry name" value="ATPase_a/bsu_AS"/>
</dbReference>
<dbReference type="InterPro" id="IPR004100">
    <property type="entry name" value="ATPase_F1/V1/A1_a/bsu_N"/>
</dbReference>
<dbReference type="InterPro" id="IPR036121">
    <property type="entry name" value="ATPase_F1/V1/A1_a/bsu_N_sf"/>
</dbReference>
<dbReference type="InterPro" id="IPR000194">
    <property type="entry name" value="ATPase_F1/V1/A1_a/bsu_nucl-bd"/>
</dbReference>
<dbReference type="InterPro" id="IPR027417">
    <property type="entry name" value="P-loop_NTPase"/>
</dbReference>
<dbReference type="NCBIfam" id="TIGR00962">
    <property type="entry name" value="atpA"/>
    <property type="match status" value="1"/>
</dbReference>
<dbReference type="NCBIfam" id="NF009884">
    <property type="entry name" value="PRK13343.1"/>
    <property type="match status" value="1"/>
</dbReference>
<dbReference type="PANTHER" id="PTHR48082">
    <property type="entry name" value="ATP SYNTHASE SUBUNIT ALPHA, MITOCHONDRIAL"/>
    <property type="match status" value="1"/>
</dbReference>
<dbReference type="PANTHER" id="PTHR48082:SF2">
    <property type="entry name" value="ATP SYNTHASE SUBUNIT ALPHA, MITOCHONDRIAL"/>
    <property type="match status" value="1"/>
</dbReference>
<dbReference type="Pfam" id="PF00006">
    <property type="entry name" value="ATP-synt_ab"/>
    <property type="match status" value="1"/>
</dbReference>
<dbReference type="Pfam" id="PF00306">
    <property type="entry name" value="ATP-synt_ab_C"/>
    <property type="match status" value="1"/>
</dbReference>
<dbReference type="Pfam" id="PF02874">
    <property type="entry name" value="ATP-synt_ab_N"/>
    <property type="match status" value="1"/>
</dbReference>
<dbReference type="PIRSF" id="PIRSF039088">
    <property type="entry name" value="F_ATPase_subunit_alpha"/>
    <property type="match status" value="1"/>
</dbReference>
<dbReference type="SUPFAM" id="SSF47917">
    <property type="entry name" value="C-terminal domain of alpha and beta subunits of F1 ATP synthase"/>
    <property type="match status" value="1"/>
</dbReference>
<dbReference type="SUPFAM" id="SSF50615">
    <property type="entry name" value="N-terminal domain of alpha and beta subunits of F1 ATP synthase"/>
    <property type="match status" value="1"/>
</dbReference>
<dbReference type="SUPFAM" id="SSF52540">
    <property type="entry name" value="P-loop containing nucleoside triphosphate hydrolases"/>
    <property type="match status" value="1"/>
</dbReference>
<dbReference type="PROSITE" id="PS00152">
    <property type="entry name" value="ATPASE_ALPHA_BETA"/>
    <property type="match status" value="1"/>
</dbReference>
<sequence length="511" mass="55514">MDIRPSEISKILKEQIRDFDQKAEVSEIGWVLSVGDGIARVYGLDNIQAGEMVSFSNGVHGMALNLEIDNVGVVIFGSDRDIREGDSVKRLGAIVDVPVGPALLGRVVDALGNPIDGKGPLKATERRRVDVKAPGIIPRQSVHEPMPTGLKAIDALIPIGRGQRELVIGDRQTGKTAILLDTFLNQKPFHEKGAGNEQDKVYCIYVAIGQKRSTVAQFVKVLEERGALEYSIIVAATASDPAPMQFIAPLAGCAMGEYFRDNGQHALIGYDDLSKQAVAYRQMSLLLRRPPGREAYPGDVFYLHSRLLERAAKLNAENGSGSLTALPVIETQANDVSAYIPTNVISITDGQIFLETNLFYQGIRPAVNVGLSVSRVGSAAQIKAMKQVAGSIKGELAQYREMAAFAQFGSDLDASTQRLLNRGARLTELLKQPQFSPLKTEEQVVVIFAGVNGYLDALAVSDVGRFEQGLLTLLRSDHPDLLQAIAHQKQITDDVKDKLIVVLNTYAKIFS</sequence>
<comment type="function">
    <text evidence="1">Produces ATP from ADP in the presence of a proton gradient across the membrane. The alpha chain is a regulatory subunit.</text>
</comment>
<comment type="catalytic activity">
    <reaction evidence="1">
        <text>ATP + H2O + 4 H(+)(in) = ADP + phosphate + 5 H(+)(out)</text>
        <dbReference type="Rhea" id="RHEA:57720"/>
        <dbReference type="ChEBI" id="CHEBI:15377"/>
        <dbReference type="ChEBI" id="CHEBI:15378"/>
        <dbReference type="ChEBI" id="CHEBI:30616"/>
        <dbReference type="ChEBI" id="CHEBI:43474"/>
        <dbReference type="ChEBI" id="CHEBI:456216"/>
        <dbReference type="EC" id="7.1.2.2"/>
    </reaction>
</comment>
<comment type="subunit">
    <text evidence="1">F-type ATPases have 2 components, CF(1) - the catalytic core - and CF(0) - the membrane proton channel. CF(1) has five subunits: alpha(3), beta(3), gamma(1), delta(1), epsilon(1). CF(0) has three main subunits: a(1), b(2) and c(9-12). The alpha and beta chains form an alternating ring which encloses part of the gamma chain. CF(1) is attached to CF(0) by a central stalk formed by the gamma and epsilon chains, while a peripheral stalk is formed by the delta and b chains.</text>
</comment>
<comment type="subcellular location">
    <subcellularLocation>
        <location evidence="1">Cell inner membrane</location>
        <topology evidence="1">Peripheral membrane protein</topology>
    </subcellularLocation>
</comment>
<comment type="similarity">
    <text evidence="1">Belongs to the ATPase alpha/beta chains family.</text>
</comment>
<name>ATPA_BARQU</name>
<feature type="chain" id="PRO_0000238203" description="ATP synthase subunit alpha">
    <location>
        <begin position="1"/>
        <end position="511"/>
    </location>
</feature>
<feature type="binding site" evidence="1">
    <location>
        <begin position="169"/>
        <end position="176"/>
    </location>
    <ligand>
        <name>ATP</name>
        <dbReference type="ChEBI" id="CHEBI:30616"/>
    </ligand>
</feature>
<feature type="site" description="Required for activity" evidence="1">
    <location>
        <position position="372"/>
    </location>
</feature>
<keyword id="KW-0066">ATP synthesis</keyword>
<keyword id="KW-0067">ATP-binding</keyword>
<keyword id="KW-0997">Cell inner membrane</keyword>
<keyword id="KW-1003">Cell membrane</keyword>
<keyword id="KW-0139">CF(1)</keyword>
<keyword id="KW-0375">Hydrogen ion transport</keyword>
<keyword id="KW-0406">Ion transport</keyword>
<keyword id="KW-0472">Membrane</keyword>
<keyword id="KW-0547">Nucleotide-binding</keyword>
<keyword id="KW-1278">Translocase</keyword>
<keyword id="KW-0813">Transport</keyword>
<evidence type="ECO:0000255" key="1">
    <source>
        <dbReference type="HAMAP-Rule" id="MF_01346"/>
    </source>
</evidence>
<organism>
    <name type="scientific">Bartonella quintana (strain Toulouse)</name>
    <name type="common">Rochalimaea quintana</name>
    <dbReference type="NCBI Taxonomy" id="283165"/>
    <lineage>
        <taxon>Bacteria</taxon>
        <taxon>Pseudomonadati</taxon>
        <taxon>Pseudomonadota</taxon>
        <taxon>Alphaproteobacteria</taxon>
        <taxon>Hyphomicrobiales</taxon>
        <taxon>Bartonellaceae</taxon>
        <taxon>Bartonella</taxon>
    </lineage>
</organism>
<proteinExistence type="inferred from homology"/>
<gene>
    <name evidence="1" type="primary">atpA</name>
    <name type="ordered locus">BQ12250</name>
</gene>
<accession>Q6FYM1</accession>